<evidence type="ECO:0000255" key="1">
    <source>
        <dbReference type="HAMAP-Rule" id="MF_00451"/>
    </source>
</evidence>
<sequence>MERTFAIIKPDAVERNISGKVLDRIEGAGFKIVGMKKIHLTKKEAEGFYYVHKERPFFNDLCTFMSRNPVIVLALEKDNAIAAWRELMGATNPANADAGTIRKDLGVSIEENTVHGSDSPESAAFEIPYFFSSLELV</sequence>
<feature type="chain" id="PRO_1000135257" description="Nucleoside diphosphate kinase">
    <location>
        <begin position="1"/>
        <end position="137"/>
    </location>
</feature>
<feature type="active site" description="Pros-phosphohistidine intermediate" evidence="1">
    <location>
        <position position="115"/>
    </location>
</feature>
<feature type="binding site" evidence="1">
    <location>
        <position position="9"/>
    </location>
    <ligand>
        <name>ATP</name>
        <dbReference type="ChEBI" id="CHEBI:30616"/>
    </ligand>
</feature>
<feature type="binding site" evidence="1">
    <location>
        <position position="57"/>
    </location>
    <ligand>
        <name>ATP</name>
        <dbReference type="ChEBI" id="CHEBI:30616"/>
    </ligand>
</feature>
<feature type="binding site" evidence="1">
    <location>
        <position position="85"/>
    </location>
    <ligand>
        <name>ATP</name>
        <dbReference type="ChEBI" id="CHEBI:30616"/>
    </ligand>
</feature>
<feature type="binding site" evidence="1">
    <location>
        <position position="91"/>
    </location>
    <ligand>
        <name>ATP</name>
        <dbReference type="ChEBI" id="CHEBI:30616"/>
    </ligand>
</feature>
<feature type="binding site" evidence="1">
    <location>
        <position position="102"/>
    </location>
    <ligand>
        <name>ATP</name>
        <dbReference type="ChEBI" id="CHEBI:30616"/>
    </ligand>
</feature>
<feature type="binding site" evidence="1">
    <location>
        <position position="112"/>
    </location>
    <ligand>
        <name>ATP</name>
        <dbReference type="ChEBI" id="CHEBI:30616"/>
    </ligand>
</feature>
<organism>
    <name type="scientific">Geotalea daltonii (strain DSM 22248 / JCM 15807 / FRC-32)</name>
    <name type="common">Geobacter daltonii</name>
    <dbReference type="NCBI Taxonomy" id="316067"/>
    <lineage>
        <taxon>Bacteria</taxon>
        <taxon>Pseudomonadati</taxon>
        <taxon>Thermodesulfobacteriota</taxon>
        <taxon>Desulfuromonadia</taxon>
        <taxon>Geobacterales</taxon>
        <taxon>Geobacteraceae</taxon>
        <taxon>Geotalea</taxon>
    </lineage>
</organism>
<proteinExistence type="inferred from homology"/>
<name>NDK_GEODF</name>
<keyword id="KW-0067">ATP-binding</keyword>
<keyword id="KW-0963">Cytoplasm</keyword>
<keyword id="KW-0418">Kinase</keyword>
<keyword id="KW-0460">Magnesium</keyword>
<keyword id="KW-0479">Metal-binding</keyword>
<keyword id="KW-0546">Nucleotide metabolism</keyword>
<keyword id="KW-0547">Nucleotide-binding</keyword>
<keyword id="KW-0597">Phosphoprotein</keyword>
<keyword id="KW-1185">Reference proteome</keyword>
<keyword id="KW-0808">Transferase</keyword>
<gene>
    <name evidence="1" type="primary">ndk</name>
    <name type="ordered locus">Geob_3546</name>
</gene>
<accession>B9M699</accession>
<dbReference type="EC" id="2.7.4.6" evidence="1"/>
<dbReference type="EMBL" id="CP001390">
    <property type="protein sequence ID" value="ACM21887.1"/>
    <property type="molecule type" value="Genomic_DNA"/>
</dbReference>
<dbReference type="RefSeq" id="WP_012648615.1">
    <property type="nucleotide sequence ID" value="NC_011979.1"/>
</dbReference>
<dbReference type="SMR" id="B9M699"/>
<dbReference type="STRING" id="316067.Geob_3546"/>
<dbReference type="KEGG" id="geo:Geob_3546"/>
<dbReference type="eggNOG" id="COG0105">
    <property type="taxonomic scope" value="Bacteria"/>
</dbReference>
<dbReference type="HOGENOM" id="CLU_060216_8_1_7"/>
<dbReference type="OrthoDB" id="9801161at2"/>
<dbReference type="Proteomes" id="UP000007721">
    <property type="component" value="Chromosome"/>
</dbReference>
<dbReference type="GO" id="GO:0005737">
    <property type="term" value="C:cytoplasm"/>
    <property type="evidence" value="ECO:0007669"/>
    <property type="project" value="UniProtKB-SubCell"/>
</dbReference>
<dbReference type="GO" id="GO:0005524">
    <property type="term" value="F:ATP binding"/>
    <property type="evidence" value="ECO:0007669"/>
    <property type="project" value="UniProtKB-UniRule"/>
</dbReference>
<dbReference type="GO" id="GO:0046872">
    <property type="term" value="F:metal ion binding"/>
    <property type="evidence" value="ECO:0007669"/>
    <property type="project" value="UniProtKB-KW"/>
</dbReference>
<dbReference type="GO" id="GO:0004550">
    <property type="term" value="F:nucleoside diphosphate kinase activity"/>
    <property type="evidence" value="ECO:0007669"/>
    <property type="project" value="UniProtKB-UniRule"/>
</dbReference>
<dbReference type="GO" id="GO:0006241">
    <property type="term" value="P:CTP biosynthetic process"/>
    <property type="evidence" value="ECO:0007669"/>
    <property type="project" value="UniProtKB-UniRule"/>
</dbReference>
<dbReference type="GO" id="GO:0006183">
    <property type="term" value="P:GTP biosynthetic process"/>
    <property type="evidence" value="ECO:0007669"/>
    <property type="project" value="UniProtKB-UniRule"/>
</dbReference>
<dbReference type="GO" id="GO:0006228">
    <property type="term" value="P:UTP biosynthetic process"/>
    <property type="evidence" value="ECO:0007669"/>
    <property type="project" value="UniProtKB-UniRule"/>
</dbReference>
<dbReference type="CDD" id="cd04413">
    <property type="entry name" value="NDPk_I"/>
    <property type="match status" value="1"/>
</dbReference>
<dbReference type="FunFam" id="3.30.70.141:FF:000003">
    <property type="entry name" value="Nucleoside diphosphate kinase"/>
    <property type="match status" value="1"/>
</dbReference>
<dbReference type="Gene3D" id="3.30.70.141">
    <property type="entry name" value="Nucleoside diphosphate kinase-like domain"/>
    <property type="match status" value="1"/>
</dbReference>
<dbReference type="HAMAP" id="MF_00451">
    <property type="entry name" value="NDP_kinase"/>
    <property type="match status" value="1"/>
</dbReference>
<dbReference type="InterPro" id="IPR034907">
    <property type="entry name" value="NDK-like_dom"/>
</dbReference>
<dbReference type="InterPro" id="IPR036850">
    <property type="entry name" value="NDK-like_dom_sf"/>
</dbReference>
<dbReference type="InterPro" id="IPR001564">
    <property type="entry name" value="Nucleoside_diP_kinase"/>
</dbReference>
<dbReference type="InterPro" id="IPR023005">
    <property type="entry name" value="Nucleoside_diP_kinase_AS"/>
</dbReference>
<dbReference type="NCBIfam" id="NF001908">
    <property type="entry name" value="PRK00668.1"/>
    <property type="match status" value="1"/>
</dbReference>
<dbReference type="PANTHER" id="PTHR46161">
    <property type="entry name" value="NUCLEOSIDE DIPHOSPHATE KINASE"/>
    <property type="match status" value="1"/>
</dbReference>
<dbReference type="PANTHER" id="PTHR46161:SF3">
    <property type="entry name" value="NUCLEOSIDE DIPHOSPHATE KINASE DDB_G0292928-RELATED"/>
    <property type="match status" value="1"/>
</dbReference>
<dbReference type="Pfam" id="PF00334">
    <property type="entry name" value="NDK"/>
    <property type="match status" value="1"/>
</dbReference>
<dbReference type="PRINTS" id="PR01243">
    <property type="entry name" value="NUCDPKINASE"/>
</dbReference>
<dbReference type="SMART" id="SM00562">
    <property type="entry name" value="NDK"/>
    <property type="match status" value="1"/>
</dbReference>
<dbReference type="SUPFAM" id="SSF54919">
    <property type="entry name" value="Nucleoside diphosphate kinase, NDK"/>
    <property type="match status" value="1"/>
</dbReference>
<dbReference type="PROSITE" id="PS00469">
    <property type="entry name" value="NDPK"/>
    <property type="match status" value="1"/>
</dbReference>
<dbReference type="PROSITE" id="PS51374">
    <property type="entry name" value="NDPK_LIKE"/>
    <property type="match status" value="1"/>
</dbReference>
<comment type="function">
    <text evidence="1">Major role in the synthesis of nucleoside triphosphates other than ATP. The ATP gamma phosphate is transferred to the NDP beta phosphate via a ping-pong mechanism, using a phosphorylated active-site intermediate.</text>
</comment>
<comment type="catalytic activity">
    <reaction evidence="1">
        <text>a 2'-deoxyribonucleoside 5'-diphosphate + ATP = a 2'-deoxyribonucleoside 5'-triphosphate + ADP</text>
        <dbReference type="Rhea" id="RHEA:44640"/>
        <dbReference type="ChEBI" id="CHEBI:30616"/>
        <dbReference type="ChEBI" id="CHEBI:61560"/>
        <dbReference type="ChEBI" id="CHEBI:73316"/>
        <dbReference type="ChEBI" id="CHEBI:456216"/>
        <dbReference type="EC" id="2.7.4.6"/>
    </reaction>
</comment>
<comment type="catalytic activity">
    <reaction evidence="1">
        <text>a ribonucleoside 5'-diphosphate + ATP = a ribonucleoside 5'-triphosphate + ADP</text>
        <dbReference type="Rhea" id="RHEA:18113"/>
        <dbReference type="ChEBI" id="CHEBI:30616"/>
        <dbReference type="ChEBI" id="CHEBI:57930"/>
        <dbReference type="ChEBI" id="CHEBI:61557"/>
        <dbReference type="ChEBI" id="CHEBI:456216"/>
        <dbReference type="EC" id="2.7.4.6"/>
    </reaction>
</comment>
<comment type="cofactor">
    <cofactor evidence="1">
        <name>Mg(2+)</name>
        <dbReference type="ChEBI" id="CHEBI:18420"/>
    </cofactor>
</comment>
<comment type="subunit">
    <text evidence="1">Homotetramer.</text>
</comment>
<comment type="subcellular location">
    <subcellularLocation>
        <location evidence="1">Cytoplasm</location>
    </subcellularLocation>
</comment>
<comment type="similarity">
    <text evidence="1">Belongs to the NDK family.</text>
</comment>
<protein>
    <recommendedName>
        <fullName evidence="1">Nucleoside diphosphate kinase</fullName>
        <shortName evidence="1">NDK</shortName>
        <shortName evidence="1">NDP kinase</shortName>
        <ecNumber evidence="1">2.7.4.6</ecNumber>
    </recommendedName>
    <alternativeName>
        <fullName evidence="1">Nucleoside-2-P kinase</fullName>
    </alternativeName>
</protein>
<reference key="1">
    <citation type="submission" date="2009-01" db="EMBL/GenBank/DDBJ databases">
        <title>Complete sequence of Geobacter sp. FRC-32.</title>
        <authorList>
            <consortium name="US DOE Joint Genome Institute"/>
            <person name="Lucas S."/>
            <person name="Copeland A."/>
            <person name="Lapidus A."/>
            <person name="Glavina del Rio T."/>
            <person name="Dalin E."/>
            <person name="Tice H."/>
            <person name="Bruce D."/>
            <person name="Goodwin L."/>
            <person name="Pitluck S."/>
            <person name="Saunders E."/>
            <person name="Brettin T."/>
            <person name="Detter J.C."/>
            <person name="Han C."/>
            <person name="Larimer F."/>
            <person name="Land M."/>
            <person name="Hauser L."/>
            <person name="Kyrpides N."/>
            <person name="Ovchinnikova G."/>
            <person name="Kostka J."/>
            <person name="Richardson P."/>
        </authorList>
    </citation>
    <scope>NUCLEOTIDE SEQUENCE [LARGE SCALE GENOMIC DNA]</scope>
    <source>
        <strain>DSM 22248 / JCM 15807 / FRC-32</strain>
    </source>
</reference>